<feature type="chain" id="PRO_0000222113" description="Uncharacterized protein ORF31">
    <location>
        <begin position="1"/>
        <end position="82"/>
    </location>
</feature>
<protein>
    <recommendedName>
        <fullName>Uncharacterized protein ORF31</fullName>
    </recommendedName>
</protein>
<gene>
    <name type="primary">ORF31</name>
</gene>
<dbReference type="EMBL" id="M75136">
    <property type="protein sequence ID" value="AAA88134.1"/>
    <property type="molecule type" value="Genomic_DNA"/>
</dbReference>
<dbReference type="PIR" id="E36789">
    <property type="entry name" value="E36789"/>
</dbReference>
<dbReference type="RefSeq" id="NP_041122.1">
    <property type="nucleotide sequence ID" value="NC_001493.2"/>
</dbReference>
<dbReference type="GeneID" id="1488384"/>
<dbReference type="KEGG" id="vg:1488384"/>
<dbReference type="Proteomes" id="UP000007643">
    <property type="component" value="Segment"/>
</dbReference>
<accession>Q00162</accession>
<keyword id="KW-1185">Reference proteome</keyword>
<sequence>MYLQMNFFPCPSPSFHLGESVMVVVVDRGTGRCTHRHGRRCITVIQSAGNPVHATDYEAYWLRERLMGMRIGRLVILYTSGK</sequence>
<name>VG31_ICHVA</name>
<reference key="1">
    <citation type="journal article" date="1992" name="Virology">
        <title>Channel catfish virus: a new type of herpesvirus.</title>
        <authorList>
            <person name="Davison A.J."/>
        </authorList>
    </citation>
    <scope>NUCLEOTIDE SEQUENCE [LARGE SCALE GENOMIC DNA]</scope>
</reference>
<organismHost>
    <name type="scientific">Ictaluridae</name>
    <name type="common">bullhead catfishes</name>
    <dbReference type="NCBI Taxonomy" id="7996"/>
</organismHost>
<proteinExistence type="predicted"/>
<organism>
    <name type="scientific">Ictalurid herpesvirus 1 (strain Auburn)</name>
    <name type="common">IcHV-1</name>
    <name type="synonym">Channel catfish herpesvirus</name>
    <dbReference type="NCBI Taxonomy" id="766178"/>
    <lineage>
        <taxon>Viruses</taxon>
        <taxon>Duplodnaviria</taxon>
        <taxon>Heunggongvirae</taxon>
        <taxon>Peploviricota</taxon>
        <taxon>Herviviricetes</taxon>
        <taxon>Herpesvirales</taxon>
        <taxon>Alloherpesviridae</taxon>
        <taxon>Ictavirus</taxon>
        <taxon>Ictavirus ictaluridallo1</taxon>
        <taxon>Ictalurid herpesvirus 1</taxon>
    </lineage>
</organism>